<reference key="1">
    <citation type="submission" date="2001-07" db="EMBL/GenBank/DDBJ databases">
        <title>Genome-wide discovery and analysis of human seven transmembrane helix receptor genes.</title>
        <authorList>
            <person name="Suwa M."/>
            <person name="Sato T."/>
            <person name="Okouchi I."/>
            <person name="Arita M."/>
            <person name="Futami K."/>
            <person name="Matsumoto S."/>
            <person name="Tsutsumi S."/>
            <person name="Aburatani H."/>
            <person name="Asai K."/>
            <person name="Akiyama Y."/>
        </authorList>
    </citation>
    <scope>NUCLEOTIDE SEQUENCE [GENOMIC DNA]</scope>
</reference>
<reference key="2">
    <citation type="submission" date="2011-04" db="EMBL/GenBank/DDBJ databases">
        <authorList>
            <person name="Sutterer S.M."/>
            <person name="Kaighin V.A."/>
            <person name="Martin A.L."/>
            <person name="Aronstam R.S."/>
        </authorList>
    </citation>
    <scope>NUCLEOTIDE SEQUENCE [MRNA]</scope>
    <source>
        <tissue>Brain</tissue>
    </source>
</reference>
<reference key="3">
    <citation type="submission" date="2005-09" db="EMBL/GenBank/DDBJ databases">
        <authorList>
            <person name="Mural R.J."/>
            <person name="Istrail S."/>
            <person name="Sutton G.G."/>
            <person name="Florea L."/>
            <person name="Halpern A.L."/>
            <person name="Mobarry C.M."/>
            <person name="Lippert R."/>
            <person name="Walenz B."/>
            <person name="Shatkay H."/>
            <person name="Dew I."/>
            <person name="Miller J.R."/>
            <person name="Flanigan M.J."/>
            <person name="Edwards N.J."/>
            <person name="Bolanos R."/>
            <person name="Fasulo D."/>
            <person name="Halldorsson B.V."/>
            <person name="Hannenhalli S."/>
            <person name="Turner R."/>
            <person name="Yooseph S."/>
            <person name="Lu F."/>
            <person name="Nusskern D.R."/>
            <person name="Shue B.C."/>
            <person name="Zheng X.H."/>
            <person name="Zhong F."/>
            <person name="Delcher A.L."/>
            <person name="Huson D.H."/>
            <person name="Kravitz S.A."/>
            <person name="Mouchard L."/>
            <person name="Reinert K."/>
            <person name="Remington K.A."/>
            <person name="Clark A.G."/>
            <person name="Waterman M.S."/>
            <person name="Eichler E.E."/>
            <person name="Adams M.D."/>
            <person name="Hunkapiller M.W."/>
            <person name="Myers E.W."/>
            <person name="Venter J.C."/>
        </authorList>
    </citation>
    <scope>NUCLEOTIDE SEQUENCE [LARGE SCALE GENOMIC DNA]</scope>
</reference>
<reference key="4">
    <citation type="journal article" date="2004" name="Genome Res.">
        <title>The status, quality, and expansion of the NIH full-length cDNA project: the Mammalian Gene Collection (MGC).</title>
        <authorList>
            <consortium name="The MGC Project Team"/>
        </authorList>
    </citation>
    <scope>NUCLEOTIDE SEQUENCE [LARGE SCALE MRNA] OF 1-316</scope>
    <source>
        <tissue>Brain</tissue>
    </source>
</reference>
<reference key="5">
    <citation type="journal article" date="2005" name="Biochim. Biophys. Acta">
        <title>Nine new human Rhodopsin family G-protein coupled receptors: identification, sequence characterisation and evolutionary relationship.</title>
        <authorList>
            <person name="Gloriam D.E."/>
            <person name="Schioth H.B."/>
            <person name="Fredriksson R."/>
        </authorList>
    </citation>
    <scope>IDENTIFICATION</scope>
</reference>
<gene>
    <name type="primary">GPR150</name>
</gene>
<comment type="function">
    <text>Orphan receptor.</text>
</comment>
<comment type="subcellular location">
    <subcellularLocation>
        <location>Cell membrane</location>
        <topology>Multi-pass membrane protein</topology>
    </subcellularLocation>
</comment>
<comment type="similarity">
    <text evidence="2">Belongs to the G-protein coupled receptor 1 family.</text>
</comment>
<feature type="chain" id="PRO_0000069630" description="Probable G-protein coupled receptor 150">
    <location>
        <begin position="1"/>
        <end position="434"/>
    </location>
</feature>
<feature type="topological domain" description="Extracellular" evidence="1">
    <location>
        <begin position="1"/>
        <end position="3"/>
    </location>
</feature>
<feature type="transmembrane region" description="Helical; Name=1" evidence="1">
    <location>
        <begin position="4"/>
        <end position="24"/>
    </location>
</feature>
<feature type="topological domain" description="Cytoplasmic" evidence="1">
    <location>
        <begin position="25"/>
        <end position="43"/>
    </location>
</feature>
<feature type="transmembrane region" description="Helical; Name=2" evidence="1">
    <location>
        <begin position="44"/>
        <end position="64"/>
    </location>
</feature>
<feature type="topological domain" description="Extracellular" evidence="1">
    <location>
        <begin position="65"/>
        <end position="81"/>
    </location>
</feature>
<feature type="transmembrane region" description="Helical; Name=3" evidence="1">
    <location>
        <begin position="82"/>
        <end position="102"/>
    </location>
</feature>
<feature type="topological domain" description="Cytoplasmic" evidence="1">
    <location>
        <begin position="103"/>
        <end position="162"/>
    </location>
</feature>
<feature type="transmembrane region" description="Helical; Name=4" evidence="1">
    <location>
        <begin position="163"/>
        <end position="183"/>
    </location>
</feature>
<feature type="topological domain" description="Extracellular" evidence="1">
    <location>
        <begin position="184"/>
        <end position="237"/>
    </location>
</feature>
<feature type="transmembrane region" description="Helical; Name=5" evidence="1">
    <location>
        <begin position="238"/>
        <end position="258"/>
    </location>
</feature>
<feature type="topological domain" description="Cytoplasmic" evidence="1">
    <location>
        <begin position="259"/>
        <end position="293"/>
    </location>
</feature>
<feature type="transmembrane region" description="Helical; Name=6" evidence="1">
    <location>
        <begin position="294"/>
        <end position="314"/>
    </location>
</feature>
<feature type="topological domain" description="Extracellular" evidence="1">
    <location>
        <begin position="315"/>
        <end position="334"/>
    </location>
</feature>
<feature type="transmembrane region" description="Helical; Name=7" evidence="1">
    <location>
        <begin position="335"/>
        <end position="355"/>
    </location>
</feature>
<feature type="topological domain" description="Cytoplasmic" evidence="1">
    <location>
        <begin position="356"/>
        <end position="434"/>
    </location>
</feature>
<feature type="region of interest" description="Disordered" evidence="3">
    <location>
        <begin position="188"/>
        <end position="210"/>
    </location>
</feature>
<feature type="region of interest" description="Disordered" evidence="3">
    <location>
        <begin position="398"/>
        <end position="434"/>
    </location>
</feature>
<feature type="compositionally biased region" description="Pro residues" evidence="3">
    <location>
        <begin position="189"/>
        <end position="205"/>
    </location>
</feature>
<feature type="compositionally biased region" description="Basic residues" evidence="3">
    <location>
        <begin position="398"/>
        <end position="407"/>
    </location>
</feature>
<feature type="compositionally biased region" description="Pro residues" evidence="3">
    <location>
        <begin position="417"/>
        <end position="426"/>
    </location>
</feature>
<organism>
    <name type="scientific">Homo sapiens</name>
    <name type="common">Human</name>
    <dbReference type="NCBI Taxonomy" id="9606"/>
    <lineage>
        <taxon>Eukaryota</taxon>
        <taxon>Metazoa</taxon>
        <taxon>Chordata</taxon>
        <taxon>Craniata</taxon>
        <taxon>Vertebrata</taxon>
        <taxon>Euteleostomi</taxon>
        <taxon>Mammalia</taxon>
        <taxon>Eutheria</taxon>
        <taxon>Euarchontoglires</taxon>
        <taxon>Primates</taxon>
        <taxon>Haplorrhini</taxon>
        <taxon>Catarrhini</taxon>
        <taxon>Hominidae</taxon>
        <taxon>Homo</taxon>
    </lineage>
</organism>
<sequence length="434" mass="46353">MEDLFSPSILPPAPNISVPILLGWGLNLTLGQGAPASGPPSRRVRLVFLGVILVVAVAGNTTVLCRLCGGGGPWAGPKRRKMDFLLVQLALADLYACGGTALSQLAWELLGEPRAATGDLACRFLQLLQASGRGASAHLVVLIALERRRAVRLPHGRPLPARALAALGWLLALLLALPPAFVVRGDSPSPLPPPPPPTSLQPGAPPAARAWPGERRCHGIFAPLPRWHLQVYAFYEAVAGFVAPVTVLGVACGHLLSVWWRHRPQAPAAAAPWSASPGRAPAPSALPRAKVQSLKMSLLLALLFVGCELPYFAARLAAAWSSGPAGDWEGEGLSAALRVVAMANSALNPFVYLFFQAGDCRLRRQLRKRLGSLCCAPQGGAEDEEGPRGHQALYRQRWPHPHYHHARREPLDEGGLRPPPPRPRPLPCSCESAF</sequence>
<dbReference type="EMBL" id="AB065678">
    <property type="protein sequence ID" value="BAC05903.1"/>
    <property type="molecule type" value="Genomic_DNA"/>
</dbReference>
<dbReference type="EMBL" id="JF810884">
    <property type="protein sequence ID" value="AEP43751.1"/>
    <property type="molecule type" value="mRNA"/>
</dbReference>
<dbReference type="EMBL" id="CH471084">
    <property type="protein sequence ID" value="EAW96041.1"/>
    <property type="molecule type" value="Genomic_DNA"/>
</dbReference>
<dbReference type="EMBL" id="BC030197">
    <property type="protein sequence ID" value="AAH30197.1"/>
    <property type="molecule type" value="mRNA"/>
</dbReference>
<dbReference type="EMBL" id="BK005422">
    <property type="protein sequence ID" value="DAA64837.1"/>
    <property type="molecule type" value="mRNA"/>
</dbReference>
<dbReference type="CCDS" id="CCDS4074.1"/>
<dbReference type="RefSeq" id="NP_954713.1">
    <property type="nucleotide sequence ID" value="NM_199243.3"/>
</dbReference>
<dbReference type="SMR" id="Q8NGU9"/>
<dbReference type="BioGRID" id="130155">
    <property type="interactions" value="28"/>
</dbReference>
<dbReference type="FunCoup" id="Q8NGU9">
    <property type="interactions" value="517"/>
</dbReference>
<dbReference type="IntAct" id="Q8NGU9">
    <property type="interactions" value="9"/>
</dbReference>
<dbReference type="STRING" id="9606.ENSP00000369344"/>
<dbReference type="ChEMBL" id="CHEMBL4523898"/>
<dbReference type="iPTMnet" id="Q8NGU9"/>
<dbReference type="PhosphoSitePlus" id="Q8NGU9"/>
<dbReference type="BioMuta" id="GPR150"/>
<dbReference type="DMDM" id="54037146"/>
<dbReference type="MassIVE" id="Q8NGU9"/>
<dbReference type="PaxDb" id="9606-ENSP00000369344"/>
<dbReference type="PeptideAtlas" id="Q8NGU9"/>
<dbReference type="ProteomicsDB" id="73606"/>
<dbReference type="Antibodypedia" id="13054">
    <property type="antibodies" value="177 antibodies from 29 providers"/>
</dbReference>
<dbReference type="DNASU" id="285601"/>
<dbReference type="Ensembl" id="ENST00000380007.3">
    <property type="protein sequence ID" value="ENSP00000369344.2"/>
    <property type="gene ID" value="ENSG00000178015.5"/>
</dbReference>
<dbReference type="GeneID" id="285601"/>
<dbReference type="KEGG" id="hsa:285601"/>
<dbReference type="MANE-Select" id="ENST00000380007.3">
    <property type="protein sequence ID" value="ENSP00000369344.2"/>
    <property type="RefSeq nucleotide sequence ID" value="NM_199243.3"/>
    <property type="RefSeq protein sequence ID" value="NP_954713.1"/>
</dbReference>
<dbReference type="UCSC" id="uc003kle.2">
    <property type="organism name" value="human"/>
</dbReference>
<dbReference type="AGR" id="HGNC:23628"/>
<dbReference type="CTD" id="285601"/>
<dbReference type="DisGeNET" id="285601"/>
<dbReference type="GeneCards" id="GPR150"/>
<dbReference type="HGNC" id="HGNC:23628">
    <property type="gene designation" value="GPR150"/>
</dbReference>
<dbReference type="HPA" id="ENSG00000178015">
    <property type="expression patterns" value="Tissue enhanced (brain, pancreas)"/>
</dbReference>
<dbReference type="neXtProt" id="NX_Q8NGU9"/>
<dbReference type="OpenTargets" id="ENSG00000178015"/>
<dbReference type="PharmGKB" id="PA134984082"/>
<dbReference type="VEuPathDB" id="HostDB:ENSG00000178015"/>
<dbReference type="eggNOG" id="KOG3656">
    <property type="taxonomic scope" value="Eukaryota"/>
</dbReference>
<dbReference type="GeneTree" id="ENSGT01130000278263"/>
<dbReference type="HOGENOM" id="CLU_009579_15_6_1"/>
<dbReference type="InParanoid" id="Q8NGU9"/>
<dbReference type="OMA" id="CRDIFAP"/>
<dbReference type="OrthoDB" id="5987909at2759"/>
<dbReference type="PAN-GO" id="Q8NGU9">
    <property type="GO annotations" value="4 GO annotations based on evolutionary models"/>
</dbReference>
<dbReference type="PhylomeDB" id="Q8NGU9"/>
<dbReference type="TreeFam" id="TF106499"/>
<dbReference type="PathwayCommons" id="Q8NGU9"/>
<dbReference type="Reactome" id="R-HSA-418555">
    <property type="pathway name" value="G alpha (s) signalling events"/>
</dbReference>
<dbReference type="BioGRID-ORCS" id="285601">
    <property type="hits" value="8 hits in 1139 CRISPR screens"/>
</dbReference>
<dbReference type="GeneWiki" id="GPR150"/>
<dbReference type="GenomeRNAi" id="285601"/>
<dbReference type="Pharos" id="Q8NGU9">
    <property type="development level" value="Tdark"/>
</dbReference>
<dbReference type="PRO" id="PR:Q8NGU9"/>
<dbReference type="Proteomes" id="UP000005640">
    <property type="component" value="Chromosome 5"/>
</dbReference>
<dbReference type="RNAct" id="Q8NGU9">
    <property type="molecule type" value="protein"/>
</dbReference>
<dbReference type="Bgee" id="ENSG00000178015">
    <property type="expression patterns" value="Expressed in body of pancreas and 75 other cell types or tissues"/>
</dbReference>
<dbReference type="GO" id="GO:0005886">
    <property type="term" value="C:plasma membrane"/>
    <property type="evidence" value="ECO:0000318"/>
    <property type="project" value="GO_Central"/>
</dbReference>
<dbReference type="GO" id="GO:0004930">
    <property type="term" value="F:G protein-coupled receptor activity"/>
    <property type="evidence" value="ECO:0000318"/>
    <property type="project" value="GO_Central"/>
</dbReference>
<dbReference type="GO" id="GO:0032870">
    <property type="term" value="P:cellular response to hormone stimulus"/>
    <property type="evidence" value="ECO:0000318"/>
    <property type="project" value="GO_Central"/>
</dbReference>
<dbReference type="GO" id="GO:0007186">
    <property type="term" value="P:G protein-coupled receptor signaling pathway"/>
    <property type="evidence" value="ECO:0000318"/>
    <property type="project" value="GO_Central"/>
</dbReference>
<dbReference type="FunFam" id="1.20.1070.10:FF:000348">
    <property type="entry name" value="G protein-coupled receptor 150"/>
    <property type="match status" value="1"/>
</dbReference>
<dbReference type="Gene3D" id="1.20.1070.10">
    <property type="entry name" value="Rhodopsin 7-helix transmembrane proteins"/>
    <property type="match status" value="1"/>
</dbReference>
<dbReference type="InterPro" id="IPR000276">
    <property type="entry name" value="GPCR_Rhodpsn"/>
</dbReference>
<dbReference type="InterPro" id="IPR017452">
    <property type="entry name" value="GPCR_Rhodpsn_7TM"/>
</dbReference>
<dbReference type="PANTHER" id="PTHR24241:SF83">
    <property type="entry name" value="G-PROTEIN COUPLED RECEPTOR 150-RELATED"/>
    <property type="match status" value="1"/>
</dbReference>
<dbReference type="PANTHER" id="PTHR24241">
    <property type="entry name" value="NEUROPEPTIDE RECEPTOR-RELATED G-PROTEIN COUPLED RECEPTOR"/>
    <property type="match status" value="1"/>
</dbReference>
<dbReference type="Pfam" id="PF00001">
    <property type="entry name" value="7tm_1"/>
    <property type="match status" value="1"/>
</dbReference>
<dbReference type="PRINTS" id="PR00237">
    <property type="entry name" value="GPCRRHODOPSN"/>
</dbReference>
<dbReference type="SUPFAM" id="SSF81321">
    <property type="entry name" value="Family A G protein-coupled receptor-like"/>
    <property type="match status" value="1"/>
</dbReference>
<dbReference type="PROSITE" id="PS50262">
    <property type="entry name" value="G_PROTEIN_RECEP_F1_2"/>
    <property type="match status" value="1"/>
</dbReference>
<accession>Q8NGU9</accession>
<accession>G4XH61</accession>
<accession>Q05C22</accession>
<evidence type="ECO:0000255" key="1"/>
<evidence type="ECO:0000255" key="2">
    <source>
        <dbReference type="PROSITE-ProRule" id="PRU00521"/>
    </source>
</evidence>
<evidence type="ECO:0000256" key="3">
    <source>
        <dbReference type="SAM" id="MobiDB-lite"/>
    </source>
</evidence>
<proteinExistence type="evidence at protein level"/>
<keyword id="KW-1003">Cell membrane</keyword>
<keyword id="KW-0297">G-protein coupled receptor</keyword>
<keyword id="KW-0472">Membrane</keyword>
<keyword id="KW-1267">Proteomics identification</keyword>
<keyword id="KW-0675">Receptor</keyword>
<keyword id="KW-1185">Reference proteome</keyword>
<keyword id="KW-0807">Transducer</keyword>
<keyword id="KW-0812">Transmembrane</keyword>
<keyword id="KW-1133">Transmembrane helix</keyword>
<name>GP150_HUMAN</name>
<protein>
    <recommendedName>
        <fullName>Probable G-protein coupled receptor 150</fullName>
    </recommendedName>
</protein>